<reference key="1">
    <citation type="journal article" date="1997" name="Nature">
        <title>The nucleotide sequence of Saccharomyces cerevisiae chromosome V.</title>
        <authorList>
            <person name="Dietrich F.S."/>
            <person name="Mulligan J.T."/>
            <person name="Hennessy K.M."/>
            <person name="Yelton M.A."/>
            <person name="Allen E."/>
            <person name="Araujo R."/>
            <person name="Aviles E."/>
            <person name="Berno A."/>
            <person name="Brennan T."/>
            <person name="Carpenter J."/>
            <person name="Chen E."/>
            <person name="Cherry J.M."/>
            <person name="Chung E."/>
            <person name="Duncan M."/>
            <person name="Guzman E."/>
            <person name="Hartzell G."/>
            <person name="Hunicke-Smith S."/>
            <person name="Hyman R.W."/>
            <person name="Kayser A."/>
            <person name="Komp C."/>
            <person name="Lashkari D."/>
            <person name="Lew H."/>
            <person name="Lin D."/>
            <person name="Mosedale D."/>
            <person name="Nakahara K."/>
            <person name="Namath A."/>
            <person name="Norgren R."/>
            <person name="Oefner P."/>
            <person name="Oh C."/>
            <person name="Petel F.X."/>
            <person name="Roberts D."/>
            <person name="Sehl P."/>
            <person name="Schramm S."/>
            <person name="Shogren T."/>
            <person name="Smith V."/>
            <person name="Taylor P."/>
            <person name="Wei Y."/>
            <person name="Botstein D."/>
            <person name="Davis R.W."/>
        </authorList>
    </citation>
    <scope>NUCLEOTIDE SEQUENCE [LARGE SCALE GENOMIC DNA]</scope>
    <source>
        <strain>ATCC 204508 / S288c</strain>
    </source>
</reference>
<reference key="2">
    <citation type="journal article" date="2014" name="G3 (Bethesda)">
        <title>The reference genome sequence of Saccharomyces cerevisiae: Then and now.</title>
        <authorList>
            <person name="Engel S.R."/>
            <person name="Dietrich F.S."/>
            <person name="Fisk D.G."/>
            <person name="Binkley G."/>
            <person name="Balakrishnan R."/>
            <person name="Costanzo M.C."/>
            <person name="Dwight S.S."/>
            <person name="Hitz B.C."/>
            <person name="Karra K."/>
            <person name="Nash R.S."/>
            <person name="Weng S."/>
            <person name="Wong E.D."/>
            <person name="Lloyd P."/>
            <person name="Skrzypek M.S."/>
            <person name="Miyasato S.R."/>
            <person name="Simison M."/>
            <person name="Cherry J.M."/>
        </authorList>
    </citation>
    <scope>GENOME REANNOTATION</scope>
    <source>
        <strain>ATCC 204508 / S288c</strain>
    </source>
</reference>
<dbReference type="EMBL" id="KJ412225">
    <property type="protein sequence ID" value="AHX39268.1"/>
    <property type="molecule type" value="Genomic_DNA"/>
</dbReference>
<dbReference type="PaxDb" id="4932-YEL018C-A"/>
<dbReference type="EnsemblFungi" id="YEL018C-A_mRNA">
    <property type="protein sequence ID" value="YEL018C-A"/>
    <property type="gene ID" value="YEL018C-A"/>
</dbReference>
<dbReference type="AGR" id="SGD:S000028742"/>
<dbReference type="SGD" id="S000028742">
    <property type="gene designation" value="YEL018C-A"/>
</dbReference>
<dbReference type="HOGENOM" id="CLU_1518701_0_0_1"/>
<dbReference type="GO" id="GO:0016020">
    <property type="term" value="C:membrane"/>
    <property type="evidence" value="ECO:0007669"/>
    <property type="project" value="UniProtKB-SubCell"/>
</dbReference>
<keyword id="KW-0472">Membrane</keyword>
<keyword id="KW-0732">Signal</keyword>
<keyword id="KW-0812">Transmembrane</keyword>
<keyword id="KW-1133">Transmembrane helix</keyword>
<proteinExistence type="uncertain"/>
<name>YE018_YEAST</name>
<sequence length="177" mass="19365">MCGVVVVIVALVPADPLLPAFACGCSCDAPVFIPFFNISSSIILICSTCVFLNRSYFSSRSFSISCISKPCRLSCPSFSVVLYSGNKFLTMVRISLMPSFLFPFATLLCLLKFVSSLISKLFCISLVNLTSDIRRLFPIMLIPPPFLTSSSFLLEIKVCISCNTTNSLTSLSIYAFL</sequence>
<protein>
    <recommendedName>
        <fullName evidence="2">Putative uncharacterized membrane protein YEL018C-A</fullName>
    </recommendedName>
</protein>
<feature type="signal peptide" evidence="1">
    <location>
        <begin position="1"/>
        <end position="22"/>
    </location>
</feature>
<feature type="chain" id="PRO_0000430991" description="Putative uncharacterized membrane protein YEL018C-A">
    <location>
        <begin position="23"/>
        <end position="177"/>
    </location>
</feature>
<feature type="transmembrane region" description="Helical; Name=1" evidence="1">
    <location>
        <begin position="31"/>
        <end position="51"/>
    </location>
</feature>
<feature type="transmembrane region" description="Helical; Name=2" evidence="1">
    <location>
        <begin position="94"/>
        <end position="114"/>
    </location>
</feature>
<feature type="transmembrane region" description="Helical; Name=3" evidence="1">
    <location>
        <begin position="136"/>
        <end position="156"/>
    </location>
</feature>
<comment type="subcellular location">
    <subcellularLocation>
        <location evidence="1">Membrane</location>
        <topology evidence="1">Multi-pass membrane protein</topology>
    </subcellularLocation>
</comment>
<comment type="miscellaneous">
    <text evidence="2">Partially overlaps EAF5.</text>
</comment>
<comment type="caution">
    <text evidence="3">Product of a dubious gene prediction unlikely to encode a functional protein. Because of that it is not part of the S.cerevisiae S288c complete/reference proteome set.</text>
</comment>
<accession>A0A023PYD9</accession>
<evidence type="ECO:0000255" key="1"/>
<evidence type="ECO:0000305" key="2"/>
<evidence type="ECO:0000305" key="3">
    <source>
    </source>
</evidence>
<evidence type="ECO:0000312" key="4">
    <source>
        <dbReference type="SGD" id="S000028742"/>
    </source>
</evidence>
<organism>
    <name type="scientific">Saccharomyces cerevisiae (strain ATCC 204508 / S288c)</name>
    <name type="common">Baker's yeast</name>
    <dbReference type="NCBI Taxonomy" id="559292"/>
    <lineage>
        <taxon>Eukaryota</taxon>
        <taxon>Fungi</taxon>
        <taxon>Dikarya</taxon>
        <taxon>Ascomycota</taxon>
        <taxon>Saccharomycotina</taxon>
        <taxon>Saccharomycetes</taxon>
        <taxon>Saccharomycetales</taxon>
        <taxon>Saccharomycetaceae</taxon>
        <taxon>Saccharomyces</taxon>
    </lineage>
</organism>
<gene>
    <name evidence="4" type="ordered locus">YEL018C-A</name>
</gene>